<evidence type="ECO:0000250" key="1"/>
<evidence type="ECO:0000250" key="2">
    <source>
        <dbReference type="UniProtKB" id="P07314"/>
    </source>
</evidence>
<evidence type="ECO:0000250" key="3">
    <source>
        <dbReference type="UniProtKB" id="P19440"/>
    </source>
</evidence>
<evidence type="ECO:0000250" key="4">
    <source>
        <dbReference type="UniProtKB" id="Q99MZ4"/>
    </source>
</evidence>
<evidence type="ECO:0000250" key="5">
    <source>
        <dbReference type="UniProtKB" id="Q9UJ14"/>
    </source>
</evidence>
<evidence type="ECO:0000255" key="6"/>
<evidence type="ECO:0000256" key="7">
    <source>
        <dbReference type="SAM" id="MobiDB-lite"/>
    </source>
</evidence>
<evidence type="ECO:0000305" key="8"/>
<evidence type="ECO:0000312" key="9">
    <source>
        <dbReference type="MGI" id="MGI:1913385"/>
    </source>
</evidence>
<evidence type="ECO:0007744" key="10">
    <source>
    </source>
</evidence>
<comment type="function">
    <text evidence="3">Hydrolyzes and transfers gamma-glutamyl moieties from glutathione and other gamma-glutamyl compounds to acceptors.</text>
</comment>
<comment type="catalytic activity">
    <reaction evidence="3">
        <text>an N-terminal (5-L-glutamyl)-[peptide] + an alpha-amino acid = 5-L-glutamyl amino acid + an N-terminal L-alpha-aminoacyl-[peptide]</text>
        <dbReference type="Rhea" id="RHEA:23904"/>
        <dbReference type="Rhea" id="RHEA-COMP:9780"/>
        <dbReference type="Rhea" id="RHEA-COMP:9795"/>
        <dbReference type="ChEBI" id="CHEBI:77644"/>
        <dbReference type="ChEBI" id="CHEBI:78597"/>
        <dbReference type="ChEBI" id="CHEBI:78599"/>
        <dbReference type="ChEBI" id="CHEBI:78608"/>
        <dbReference type="EC" id="2.3.2.2"/>
    </reaction>
    <physiologicalReaction direction="left-to-right" evidence="3">
        <dbReference type="Rhea" id="RHEA:23905"/>
    </physiologicalReaction>
</comment>
<comment type="catalytic activity">
    <reaction evidence="3">
        <text>glutathione + H2O = L-cysteinylglycine + L-glutamate</text>
        <dbReference type="Rhea" id="RHEA:28807"/>
        <dbReference type="ChEBI" id="CHEBI:15377"/>
        <dbReference type="ChEBI" id="CHEBI:29985"/>
        <dbReference type="ChEBI" id="CHEBI:57925"/>
        <dbReference type="ChEBI" id="CHEBI:61694"/>
        <dbReference type="EC" id="3.4.19.13"/>
    </reaction>
    <physiologicalReaction direction="left-to-right" evidence="3">
        <dbReference type="Rhea" id="RHEA:28808"/>
    </physiologicalReaction>
</comment>
<comment type="catalytic activity">
    <reaction evidence="3">
        <text>an S-substituted glutathione + H2O = an S-substituted L-cysteinylglycine + L-glutamate</text>
        <dbReference type="Rhea" id="RHEA:59468"/>
        <dbReference type="ChEBI" id="CHEBI:15377"/>
        <dbReference type="ChEBI" id="CHEBI:29985"/>
        <dbReference type="ChEBI" id="CHEBI:90779"/>
        <dbReference type="ChEBI" id="CHEBI:143103"/>
        <dbReference type="EC" id="3.4.19.13"/>
    </reaction>
    <physiologicalReaction direction="left-to-right" evidence="3">
        <dbReference type="Rhea" id="RHEA:59469"/>
    </physiologicalReaction>
</comment>
<comment type="pathway">
    <text evidence="3">Sulfur metabolism; glutathione metabolism.</text>
</comment>
<comment type="subunit">
    <text evidence="3">Heterodimer composed of the light and heavy chains. The active site is located in the light chain.</text>
</comment>
<comment type="subcellular location">
    <subcellularLocation>
        <location evidence="3">Membrane</location>
        <topology evidence="2">Single-pass type II membrane protein</topology>
    </subcellularLocation>
</comment>
<comment type="PTM">
    <text evidence="3">Cleaved by autocatalysis into a large and a small subunit and the autocatalytic cleavage is essential to the functional activation of the enzyme.</text>
</comment>
<comment type="similarity">
    <text evidence="8">Belongs to the gamma-glutamyltransferase family.</text>
</comment>
<gene>
    <name evidence="9" type="primary">Ggt7</name>
    <name type="synonym">Ggtl3</name>
</gene>
<keyword id="KW-0012">Acyltransferase</keyword>
<keyword id="KW-0317">Glutathione biosynthesis</keyword>
<keyword id="KW-0325">Glycoprotein</keyword>
<keyword id="KW-0378">Hydrolase</keyword>
<keyword id="KW-0472">Membrane</keyword>
<keyword id="KW-0597">Phosphoprotein</keyword>
<keyword id="KW-1185">Reference proteome</keyword>
<keyword id="KW-0735">Signal-anchor</keyword>
<keyword id="KW-0808">Transferase</keyword>
<keyword id="KW-0812">Transmembrane</keyword>
<keyword id="KW-1133">Transmembrane helix</keyword>
<keyword id="KW-0865">Zymogen</keyword>
<proteinExistence type="evidence at protein level"/>
<organism>
    <name type="scientific">Mus musculus</name>
    <name type="common">Mouse</name>
    <dbReference type="NCBI Taxonomy" id="10090"/>
    <lineage>
        <taxon>Eukaryota</taxon>
        <taxon>Metazoa</taxon>
        <taxon>Chordata</taxon>
        <taxon>Craniata</taxon>
        <taxon>Vertebrata</taxon>
        <taxon>Euteleostomi</taxon>
        <taxon>Mammalia</taxon>
        <taxon>Eutheria</taxon>
        <taxon>Euarchontoglires</taxon>
        <taxon>Glires</taxon>
        <taxon>Rodentia</taxon>
        <taxon>Myomorpha</taxon>
        <taxon>Muroidea</taxon>
        <taxon>Muridae</taxon>
        <taxon>Murinae</taxon>
        <taxon>Mus</taxon>
        <taxon>Mus</taxon>
    </lineage>
</organism>
<dbReference type="EC" id="3.4.19.13" evidence="3"/>
<dbReference type="EC" id="2.3.2.2" evidence="3"/>
<dbReference type="EMBL" id="AK032051">
    <property type="protein sequence ID" value="BAC27672.1"/>
    <property type="molecule type" value="mRNA"/>
</dbReference>
<dbReference type="EMBL" id="AL844852">
    <property type="status" value="NOT_ANNOTATED_CDS"/>
    <property type="molecule type" value="Genomic_DNA"/>
</dbReference>
<dbReference type="EMBL" id="BC005772">
    <property type="protein sequence ID" value="AAH05772.1"/>
    <property type="molecule type" value="mRNA"/>
</dbReference>
<dbReference type="EMBL" id="AF332053">
    <property type="protein sequence ID" value="AAK56082.1"/>
    <property type="molecule type" value="mRNA"/>
</dbReference>
<dbReference type="EMBL" id="AF332054">
    <property type="protein sequence ID" value="AAK56083.1"/>
    <property type="molecule type" value="mRNA"/>
</dbReference>
<dbReference type="CCDS" id="CCDS16949.1"/>
<dbReference type="RefSeq" id="NP_659035.2">
    <property type="nucleotide sequence ID" value="NM_144786.2"/>
</dbReference>
<dbReference type="SMR" id="Q99JP7"/>
<dbReference type="BioGRID" id="228881">
    <property type="interactions" value="6"/>
</dbReference>
<dbReference type="FunCoup" id="Q99JP7">
    <property type="interactions" value="584"/>
</dbReference>
<dbReference type="IntAct" id="Q99JP7">
    <property type="interactions" value="1"/>
</dbReference>
<dbReference type="MINT" id="Q99JP7"/>
<dbReference type="STRING" id="10090.ENSMUSP00000029131"/>
<dbReference type="MEROPS" id="T03.017"/>
<dbReference type="GlyConnect" id="2332">
    <property type="glycosylation" value="13 N-Linked glycans (3 sites)"/>
</dbReference>
<dbReference type="GlyCosmos" id="Q99JP7">
    <property type="glycosylation" value="9 sites, 12 glycans"/>
</dbReference>
<dbReference type="GlyGen" id="Q99JP7">
    <property type="glycosylation" value="9 sites, 15 N-linked glycans (6 sites)"/>
</dbReference>
<dbReference type="iPTMnet" id="Q99JP7"/>
<dbReference type="PhosphoSitePlus" id="Q99JP7"/>
<dbReference type="SwissPalm" id="Q99JP7"/>
<dbReference type="jPOST" id="Q99JP7"/>
<dbReference type="PaxDb" id="10090-ENSMUSP00000029131"/>
<dbReference type="PeptideAtlas" id="Q99JP7"/>
<dbReference type="ProteomicsDB" id="267792"/>
<dbReference type="Pumba" id="Q99JP7"/>
<dbReference type="Antibodypedia" id="2429">
    <property type="antibodies" value="143 antibodies from 24 providers"/>
</dbReference>
<dbReference type="DNASU" id="207182"/>
<dbReference type="Ensembl" id="ENSMUST00000029131.11">
    <property type="protein sequence ID" value="ENSMUSP00000029131.5"/>
    <property type="gene ID" value="ENSMUSG00000027603.16"/>
</dbReference>
<dbReference type="GeneID" id="207182"/>
<dbReference type="KEGG" id="mmu:207182"/>
<dbReference type="UCSC" id="uc012chc.1">
    <property type="organism name" value="mouse"/>
</dbReference>
<dbReference type="AGR" id="MGI:1913385"/>
<dbReference type="CTD" id="2686"/>
<dbReference type="MGI" id="MGI:1913385">
    <property type="gene designation" value="Ggt7"/>
</dbReference>
<dbReference type="VEuPathDB" id="HostDB:ENSMUSG00000027603"/>
<dbReference type="eggNOG" id="KOG2410">
    <property type="taxonomic scope" value="Eukaryota"/>
</dbReference>
<dbReference type="GeneTree" id="ENSGT00940000156917"/>
<dbReference type="HOGENOM" id="CLU_014813_4_1_1"/>
<dbReference type="InParanoid" id="Q99JP7"/>
<dbReference type="OMA" id="GVIICEI"/>
<dbReference type="OrthoDB" id="2015213at2759"/>
<dbReference type="PhylomeDB" id="Q99JP7"/>
<dbReference type="TreeFam" id="TF333329"/>
<dbReference type="Reactome" id="R-MMU-174403">
    <property type="pathway name" value="Glutathione synthesis and recycling"/>
</dbReference>
<dbReference type="Reactome" id="R-MMU-5423646">
    <property type="pathway name" value="Aflatoxin activation and detoxification"/>
</dbReference>
<dbReference type="Reactome" id="R-MMU-9753281">
    <property type="pathway name" value="Paracetamol ADME"/>
</dbReference>
<dbReference type="SABIO-RK" id="Q99JP7"/>
<dbReference type="UniPathway" id="UPA00204"/>
<dbReference type="BioGRID-ORCS" id="207182">
    <property type="hits" value="2 hits in 79 CRISPR screens"/>
</dbReference>
<dbReference type="ChiTaRS" id="Ggt7">
    <property type="organism name" value="mouse"/>
</dbReference>
<dbReference type="PRO" id="PR:Q99JP7"/>
<dbReference type="Proteomes" id="UP000000589">
    <property type="component" value="Chromosome 2"/>
</dbReference>
<dbReference type="RNAct" id="Q99JP7">
    <property type="molecule type" value="protein"/>
</dbReference>
<dbReference type="Bgee" id="ENSMUSG00000027603">
    <property type="expression patterns" value="Expressed in nasal cavity epithelium and 142 other cell types or tissues"/>
</dbReference>
<dbReference type="ExpressionAtlas" id="Q99JP7">
    <property type="expression patterns" value="baseline and differential"/>
</dbReference>
<dbReference type="GO" id="GO:0016020">
    <property type="term" value="C:membrane"/>
    <property type="evidence" value="ECO:0007669"/>
    <property type="project" value="UniProtKB-SubCell"/>
</dbReference>
<dbReference type="GO" id="GO:0036374">
    <property type="term" value="F:glutathione hydrolase activity"/>
    <property type="evidence" value="ECO:0007669"/>
    <property type="project" value="UniProtKB-EC"/>
</dbReference>
<dbReference type="GO" id="GO:0103068">
    <property type="term" value="F:leukotriene C4 gamma-glutamyl transferase activity"/>
    <property type="evidence" value="ECO:0007669"/>
    <property type="project" value="UniProtKB-EC"/>
</dbReference>
<dbReference type="GO" id="GO:0006750">
    <property type="term" value="P:glutathione biosynthetic process"/>
    <property type="evidence" value="ECO:0007669"/>
    <property type="project" value="UniProtKB-KW"/>
</dbReference>
<dbReference type="GO" id="GO:0006751">
    <property type="term" value="P:glutathione catabolic process"/>
    <property type="evidence" value="ECO:0007669"/>
    <property type="project" value="InterPro"/>
</dbReference>
<dbReference type="GO" id="GO:1902883">
    <property type="term" value="P:negative regulation of response to oxidative stress"/>
    <property type="evidence" value="ECO:0007669"/>
    <property type="project" value="Ensembl"/>
</dbReference>
<dbReference type="FunFam" id="3.60.20.40:FF:000002">
    <property type="entry name" value="gamma-glutamyltransferase 7"/>
    <property type="match status" value="1"/>
</dbReference>
<dbReference type="FunFam" id="1.10.246.130:FF:000003">
    <property type="entry name" value="Glutathione hydrolase 7"/>
    <property type="match status" value="1"/>
</dbReference>
<dbReference type="Gene3D" id="1.10.246.130">
    <property type="match status" value="1"/>
</dbReference>
<dbReference type="Gene3D" id="3.60.20.40">
    <property type="match status" value="1"/>
</dbReference>
<dbReference type="InterPro" id="IPR043138">
    <property type="entry name" value="GGT_lsub_C"/>
</dbReference>
<dbReference type="InterPro" id="IPR000101">
    <property type="entry name" value="GGT_peptidase"/>
</dbReference>
<dbReference type="InterPro" id="IPR043137">
    <property type="entry name" value="GGT_ssub"/>
</dbReference>
<dbReference type="InterPro" id="IPR029055">
    <property type="entry name" value="Ntn_hydrolases_N"/>
</dbReference>
<dbReference type="PANTHER" id="PTHR11686">
    <property type="entry name" value="GAMMA GLUTAMYL TRANSPEPTIDASE"/>
    <property type="match status" value="1"/>
</dbReference>
<dbReference type="PANTHER" id="PTHR11686:SF54">
    <property type="entry name" value="GLUTATHIONE HYDROLASE 7"/>
    <property type="match status" value="1"/>
</dbReference>
<dbReference type="Pfam" id="PF01019">
    <property type="entry name" value="G_glu_transpept"/>
    <property type="match status" value="1"/>
</dbReference>
<dbReference type="PRINTS" id="PR01210">
    <property type="entry name" value="GGTRANSPTASE"/>
</dbReference>
<dbReference type="SUPFAM" id="SSF56235">
    <property type="entry name" value="N-terminal nucleophile aminohydrolases (Ntn hydrolases)"/>
    <property type="match status" value="1"/>
</dbReference>
<name>GGT7_MOUSE</name>
<protein>
    <recommendedName>
        <fullName evidence="8">Glutathione hydrolase 7</fullName>
        <ecNumber evidence="3">3.4.19.13</ecNumber>
    </recommendedName>
    <alternativeName>
        <fullName>Gamma-glutamyltransferase 7</fullName>
        <shortName>GGT 7</shortName>
        <ecNumber evidence="3">2.3.2.2</ecNumber>
    </alternativeName>
    <alternativeName>
        <fullName>Gamma-glutamyltransferase-like 3</fullName>
    </alternativeName>
    <alternativeName>
        <fullName>Gamma-glutamyltranspeptidase 7</fullName>
    </alternativeName>
    <component>
        <recommendedName>
            <fullName>Glutathione hydrolase 7 heavy chain</fullName>
        </recommendedName>
    </component>
    <component>
        <recommendedName>
            <fullName>Glutathione hydrolase 7 light chain</fullName>
        </recommendedName>
    </component>
</protein>
<accession>Q99JP7</accession>
<accession>A2AQN1</accession>
<accession>Q91V91</accession>
<sequence length="662" mass="70251">MAAENEASQESALGAYSPVDYMSITSFPRLPEDEPAPAAPLRGRKDEDAFLGDPDTDPDSFLKSARLQRLPSSSSEMGSQDGSPLRETRKDPFSAAAAECSCRQDGLTVIVTACLTFATGVTVALVMQIYFGDPQIFQQGAVVTDASSCTALGMEVLSKQGSSVDAAVAAALCLGIVAPHSSGLGGGGVMLVHDIRRNESHLIDFRESAPGALREEALQRSWDTKPGLLVGVPGMVKGLHEAHQLYGRLPWSQVLAFAAAVAQDGFNVTHDLAHALAEQLPPNASDRFLDTFLPLGHPPLPGSLLRRPDLAEVLDILGTSGPAAFYNGGNLTLEMVAEAQHAGGVITEEDFSNYSALTEKPVCGVYRGHLVLSPPPPHTGPALISALNILEGFNLTSLVSREQALHWVAETLKIALALASRLGDPVYDSTITESMDDMLSKVEAANFRGHISDSQAAPAPLLPVYELDGAPTAAQVLVMGPDDFIVAMVSSLNRPFGSGLLTPSGILLNSQMLDFSWPNRTANHSAPSLENSVQPGKRPLSFLLPTVVRPAEGLCGTYLALGANGAARGLSGLTQVLLNVLTLNRNLSDSLARGRLHPDLQSNLLQVDSEFTEEEIEFLEARGHHVEKVDVLSWVHGSRRTNTFIIGVKDPRSPDAAGATIL</sequence>
<reference key="1">
    <citation type="journal article" date="2005" name="Science">
        <title>The transcriptional landscape of the mammalian genome.</title>
        <authorList>
            <person name="Carninci P."/>
            <person name="Kasukawa T."/>
            <person name="Katayama S."/>
            <person name="Gough J."/>
            <person name="Frith M.C."/>
            <person name="Maeda N."/>
            <person name="Oyama R."/>
            <person name="Ravasi T."/>
            <person name="Lenhard B."/>
            <person name="Wells C."/>
            <person name="Kodzius R."/>
            <person name="Shimokawa K."/>
            <person name="Bajic V.B."/>
            <person name="Brenner S.E."/>
            <person name="Batalov S."/>
            <person name="Forrest A.R."/>
            <person name="Zavolan M."/>
            <person name="Davis M.J."/>
            <person name="Wilming L.G."/>
            <person name="Aidinis V."/>
            <person name="Allen J.E."/>
            <person name="Ambesi-Impiombato A."/>
            <person name="Apweiler R."/>
            <person name="Aturaliya R.N."/>
            <person name="Bailey T.L."/>
            <person name="Bansal M."/>
            <person name="Baxter L."/>
            <person name="Beisel K.W."/>
            <person name="Bersano T."/>
            <person name="Bono H."/>
            <person name="Chalk A.M."/>
            <person name="Chiu K.P."/>
            <person name="Choudhary V."/>
            <person name="Christoffels A."/>
            <person name="Clutterbuck D.R."/>
            <person name="Crowe M.L."/>
            <person name="Dalla E."/>
            <person name="Dalrymple B.P."/>
            <person name="de Bono B."/>
            <person name="Della Gatta G."/>
            <person name="di Bernardo D."/>
            <person name="Down T."/>
            <person name="Engstrom P."/>
            <person name="Fagiolini M."/>
            <person name="Faulkner G."/>
            <person name="Fletcher C.F."/>
            <person name="Fukushima T."/>
            <person name="Furuno M."/>
            <person name="Futaki S."/>
            <person name="Gariboldi M."/>
            <person name="Georgii-Hemming P."/>
            <person name="Gingeras T.R."/>
            <person name="Gojobori T."/>
            <person name="Green R.E."/>
            <person name="Gustincich S."/>
            <person name="Harbers M."/>
            <person name="Hayashi Y."/>
            <person name="Hensch T.K."/>
            <person name="Hirokawa N."/>
            <person name="Hill D."/>
            <person name="Huminiecki L."/>
            <person name="Iacono M."/>
            <person name="Ikeo K."/>
            <person name="Iwama A."/>
            <person name="Ishikawa T."/>
            <person name="Jakt M."/>
            <person name="Kanapin A."/>
            <person name="Katoh M."/>
            <person name="Kawasawa Y."/>
            <person name="Kelso J."/>
            <person name="Kitamura H."/>
            <person name="Kitano H."/>
            <person name="Kollias G."/>
            <person name="Krishnan S.P."/>
            <person name="Kruger A."/>
            <person name="Kummerfeld S.K."/>
            <person name="Kurochkin I.V."/>
            <person name="Lareau L.F."/>
            <person name="Lazarevic D."/>
            <person name="Lipovich L."/>
            <person name="Liu J."/>
            <person name="Liuni S."/>
            <person name="McWilliam S."/>
            <person name="Madan Babu M."/>
            <person name="Madera M."/>
            <person name="Marchionni L."/>
            <person name="Matsuda H."/>
            <person name="Matsuzawa S."/>
            <person name="Miki H."/>
            <person name="Mignone F."/>
            <person name="Miyake S."/>
            <person name="Morris K."/>
            <person name="Mottagui-Tabar S."/>
            <person name="Mulder N."/>
            <person name="Nakano N."/>
            <person name="Nakauchi H."/>
            <person name="Ng P."/>
            <person name="Nilsson R."/>
            <person name="Nishiguchi S."/>
            <person name="Nishikawa S."/>
            <person name="Nori F."/>
            <person name="Ohara O."/>
            <person name="Okazaki Y."/>
            <person name="Orlando V."/>
            <person name="Pang K.C."/>
            <person name="Pavan W.J."/>
            <person name="Pavesi G."/>
            <person name="Pesole G."/>
            <person name="Petrovsky N."/>
            <person name="Piazza S."/>
            <person name="Reed J."/>
            <person name="Reid J.F."/>
            <person name="Ring B.Z."/>
            <person name="Ringwald M."/>
            <person name="Rost B."/>
            <person name="Ruan Y."/>
            <person name="Salzberg S.L."/>
            <person name="Sandelin A."/>
            <person name="Schneider C."/>
            <person name="Schoenbach C."/>
            <person name="Sekiguchi K."/>
            <person name="Semple C.A."/>
            <person name="Seno S."/>
            <person name="Sessa L."/>
            <person name="Sheng Y."/>
            <person name="Shibata Y."/>
            <person name="Shimada H."/>
            <person name="Shimada K."/>
            <person name="Silva D."/>
            <person name="Sinclair B."/>
            <person name="Sperling S."/>
            <person name="Stupka E."/>
            <person name="Sugiura K."/>
            <person name="Sultana R."/>
            <person name="Takenaka Y."/>
            <person name="Taki K."/>
            <person name="Tammoja K."/>
            <person name="Tan S.L."/>
            <person name="Tang S."/>
            <person name="Taylor M.S."/>
            <person name="Tegner J."/>
            <person name="Teichmann S.A."/>
            <person name="Ueda H.R."/>
            <person name="van Nimwegen E."/>
            <person name="Verardo R."/>
            <person name="Wei C.L."/>
            <person name="Yagi K."/>
            <person name="Yamanishi H."/>
            <person name="Zabarovsky E."/>
            <person name="Zhu S."/>
            <person name="Zimmer A."/>
            <person name="Hide W."/>
            <person name="Bult C."/>
            <person name="Grimmond S.M."/>
            <person name="Teasdale R.D."/>
            <person name="Liu E.T."/>
            <person name="Brusic V."/>
            <person name="Quackenbush J."/>
            <person name="Wahlestedt C."/>
            <person name="Mattick J.S."/>
            <person name="Hume D.A."/>
            <person name="Kai C."/>
            <person name="Sasaki D."/>
            <person name="Tomaru Y."/>
            <person name="Fukuda S."/>
            <person name="Kanamori-Katayama M."/>
            <person name="Suzuki M."/>
            <person name="Aoki J."/>
            <person name="Arakawa T."/>
            <person name="Iida J."/>
            <person name="Imamura K."/>
            <person name="Itoh M."/>
            <person name="Kato T."/>
            <person name="Kawaji H."/>
            <person name="Kawagashira N."/>
            <person name="Kawashima T."/>
            <person name="Kojima M."/>
            <person name="Kondo S."/>
            <person name="Konno H."/>
            <person name="Nakano K."/>
            <person name="Ninomiya N."/>
            <person name="Nishio T."/>
            <person name="Okada M."/>
            <person name="Plessy C."/>
            <person name="Shibata K."/>
            <person name="Shiraki T."/>
            <person name="Suzuki S."/>
            <person name="Tagami M."/>
            <person name="Waki K."/>
            <person name="Watahiki A."/>
            <person name="Okamura-Oho Y."/>
            <person name="Suzuki H."/>
            <person name="Kawai J."/>
            <person name="Hayashizaki Y."/>
        </authorList>
    </citation>
    <scope>NUCLEOTIDE SEQUENCE [LARGE SCALE MRNA]</scope>
    <source>
        <strain>C57BL/6J</strain>
        <tissue>Medulla oblongata</tissue>
    </source>
</reference>
<reference key="2">
    <citation type="journal article" date="2009" name="PLoS Biol.">
        <title>Lineage-specific biology revealed by a finished genome assembly of the mouse.</title>
        <authorList>
            <person name="Church D.M."/>
            <person name="Goodstadt L."/>
            <person name="Hillier L.W."/>
            <person name="Zody M.C."/>
            <person name="Goldstein S."/>
            <person name="She X."/>
            <person name="Bult C.J."/>
            <person name="Agarwala R."/>
            <person name="Cherry J.L."/>
            <person name="DiCuccio M."/>
            <person name="Hlavina W."/>
            <person name="Kapustin Y."/>
            <person name="Meric P."/>
            <person name="Maglott D."/>
            <person name="Birtle Z."/>
            <person name="Marques A.C."/>
            <person name="Graves T."/>
            <person name="Zhou S."/>
            <person name="Teague B."/>
            <person name="Potamousis K."/>
            <person name="Churas C."/>
            <person name="Place M."/>
            <person name="Herschleb J."/>
            <person name="Runnheim R."/>
            <person name="Forrest D."/>
            <person name="Amos-Landgraf J."/>
            <person name="Schwartz D.C."/>
            <person name="Cheng Z."/>
            <person name="Lindblad-Toh K."/>
            <person name="Eichler E.E."/>
            <person name="Ponting C.P."/>
        </authorList>
    </citation>
    <scope>NUCLEOTIDE SEQUENCE [LARGE SCALE GENOMIC DNA]</scope>
    <source>
        <strain>C57BL/6J</strain>
    </source>
</reference>
<reference key="3">
    <citation type="journal article" date="2004" name="Genome Res.">
        <title>The status, quality, and expansion of the NIH full-length cDNA project: the Mammalian Gene Collection (MGC).</title>
        <authorList>
            <consortium name="The MGC Project Team"/>
        </authorList>
    </citation>
    <scope>NUCLEOTIDE SEQUENCE [LARGE SCALE MRNA]</scope>
    <source>
        <tissue>Mammary cancer</tissue>
    </source>
</reference>
<reference key="4">
    <citation type="journal article" date="2001" name="Mamm. Genome">
        <title>High-throughput sequence identification of gene coding variants within alcohol-related QTLs.</title>
        <authorList>
            <person name="Ehringer M.A."/>
            <person name="Thompson J."/>
            <person name="Conroy O."/>
            <person name="Xu Y."/>
            <person name="Yang F."/>
            <person name="Canniff J."/>
            <person name="Beeson M."/>
            <person name="Gordon L."/>
            <person name="Bennett B."/>
            <person name="Johnson T.E."/>
            <person name="Sikela J.M."/>
        </authorList>
    </citation>
    <scope>NUCLEOTIDE SEQUENCE [MRNA] OF 552-662</scope>
    <source>
        <strain>ILS</strain>
        <strain>ISS</strain>
    </source>
</reference>
<reference key="5">
    <citation type="journal article" date="2010" name="Cell">
        <title>A tissue-specific atlas of mouse protein phosphorylation and expression.</title>
        <authorList>
            <person name="Huttlin E.L."/>
            <person name="Jedrychowski M.P."/>
            <person name="Elias J.E."/>
            <person name="Goswami T."/>
            <person name="Rad R."/>
            <person name="Beausoleil S.A."/>
            <person name="Villen J."/>
            <person name="Haas W."/>
            <person name="Sowa M.E."/>
            <person name="Gygi S.P."/>
        </authorList>
    </citation>
    <scope>PHOSPHORYLATION [LARGE SCALE ANALYSIS] AT SER-79 AND SER-83</scope>
    <scope>IDENTIFICATION BY MASS SPECTROMETRY [LARGE SCALE ANALYSIS]</scope>
    <source>
        <tissue>Brain</tissue>
    </source>
</reference>
<feature type="chain" id="PRO_0000011068" description="Glutathione hydrolase 7 heavy chain" evidence="1">
    <location>
        <begin position="1"/>
        <end position="472"/>
    </location>
</feature>
<feature type="chain" id="PRO_0000011069" description="Glutathione hydrolase 7 light chain" evidence="1">
    <location>
        <begin position="473"/>
        <end position="662"/>
    </location>
</feature>
<feature type="topological domain" description="Cytoplasmic" evidence="2">
    <location>
        <begin position="1"/>
        <end position="106"/>
    </location>
</feature>
<feature type="transmembrane region" description="Helical; Signal-anchor for type II membrane protein" evidence="6">
    <location>
        <begin position="107"/>
        <end position="127"/>
    </location>
</feature>
<feature type="topological domain" description="Extracellular" evidence="2">
    <location>
        <begin position="128"/>
        <end position="662"/>
    </location>
</feature>
<feature type="region of interest" description="Disordered" evidence="7">
    <location>
        <begin position="26"/>
        <end position="90"/>
    </location>
</feature>
<feature type="compositionally biased region" description="Low complexity" evidence="7">
    <location>
        <begin position="72"/>
        <end position="83"/>
    </location>
</feature>
<feature type="modified residue" description="Phosphoserine" evidence="4">
    <location>
        <position position="17"/>
    </location>
</feature>
<feature type="modified residue" description="Phosphoserine" evidence="5">
    <location>
        <position position="72"/>
    </location>
</feature>
<feature type="modified residue" description="Phosphoserine" evidence="10">
    <location>
        <position position="79"/>
    </location>
</feature>
<feature type="modified residue" description="Phosphoserine" evidence="10">
    <location>
        <position position="83"/>
    </location>
</feature>
<feature type="glycosylation site" description="N-linked (GlcNAc...) asparagine" evidence="6">
    <location>
        <position position="198"/>
    </location>
</feature>
<feature type="glycosylation site" description="N-linked (GlcNAc...) asparagine" evidence="6">
    <location>
        <position position="267"/>
    </location>
</feature>
<feature type="glycosylation site" description="N-linked (GlcNAc...) asparagine" evidence="6">
    <location>
        <position position="283"/>
    </location>
</feature>
<feature type="glycosylation site" description="N-linked (GlcNAc...) asparagine" evidence="6">
    <location>
        <position position="330"/>
    </location>
</feature>
<feature type="glycosylation site" description="N-linked (GlcNAc...) asparagine" evidence="6">
    <location>
        <position position="353"/>
    </location>
</feature>
<feature type="glycosylation site" description="N-linked (GlcNAc...) asparagine" evidence="6">
    <location>
        <position position="394"/>
    </location>
</feature>
<feature type="glycosylation site" description="N-linked (GlcNAc...) asparagine" evidence="6">
    <location>
        <position position="519"/>
    </location>
</feature>
<feature type="glycosylation site" description="N-linked (GlcNAc...) asparagine" evidence="6">
    <location>
        <position position="523"/>
    </location>
</feature>
<feature type="glycosylation site" description="N-linked (GlcNAc...) asparagine" evidence="6">
    <location>
        <position position="586"/>
    </location>
</feature>
<feature type="sequence conflict" description="In Ref. 3; AAH05772." evidence="8" ref="3">
    <original>S</original>
    <variation>H</variation>
    <location>
        <position position="148"/>
    </location>
</feature>